<reference key="1">
    <citation type="journal article" date="2005" name="Nature">
        <title>Genomic sequence of the pathogenic and allergenic filamentous fungus Aspergillus fumigatus.</title>
        <authorList>
            <person name="Nierman W.C."/>
            <person name="Pain A."/>
            <person name="Anderson M.J."/>
            <person name="Wortman J.R."/>
            <person name="Kim H.S."/>
            <person name="Arroyo J."/>
            <person name="Berriman M."/>
            <person name="Abe K."/>
            <person name="Archer D.B."/>
            <person name="Bermejo C."/>
            <person name="Bennett J.W."/>
            <person name="Bowyer P."/>
            <person name="Chen D."/>
            <person name="Collins M."/>
            <person name="Coulsen R."/>
            <person name="Davies R."/>
            <person name="Dyer P.S."/>
            <person name="Farman M.L."/>
            <person name="Fedorova N."/>
            <person name="Fedorova N.D."/>
            <person name="Feldblyum T.V."/>
            <person name="Fischer R."/>
            <person name="Fosker N."/>
            <person name="Fraser A."/>
            <person name="Garcia J.L."/>
            <person name="Garcia M.J."/>
            <person name="Goble A."/>
            <person name="Goldman G.H."/>
            <person name="Gomi K."/>
            <person name="Griffith-Jones S."/>
            <person name="Gwilliam R."/>
            <person name="Haas B.J."/>
            <person name="Haas H."/>
            <person name="Harris D.E."/>
            <person name="Horiuchi H."/>
            <person name="Huang J."/>
            <person name="Humphray S."/>
            <person name="Jimenez J."/>
            <person name="Keller N."/>
            <person name="Khouri H."/>
            <person name="Kitamoto K."/>
            <person name="Kobayashi T."/>
            <person name="Konzack S."/>
            <person name="Kulkarni R."/>
            <person name="Kumagai T."/>
            <person name="Lafton A."/>
            <person name="Latge J.-P."/>
            <person name="Li W."/>
            <person name="Lord A."/>
            <person name="Lu C."/>
            <person name="Majoros W.H."/>
            <person name="May G.S."/>
            <person name="Miller B.L."/>
            <person name="Mohamoud Y."/>
            <person name="Molina M."/>
            <person name="Monod M."/>
            <person name="Mouyna I."/>
            <person name="Mulligan S."/>
            <person name="Murphy L.D."/>
            <person name="O'Neil S."/>
            <person name="Paulsen I."/>
            <person name="Penalva M.A."/>
            <person name="Pertea M."/>
            <person name="Price C."/>
            <person name="Pritchard B.L."/>
            <person name="Quail M.A."/>
            <person name="Rabbinowitsch E."/>
            <person name="Rawlins N."/>
            <person name="Rajandream M.A."/>
            <person name="Reichard U."/>
            <person name="Renauld H."/>
            <person name="Robson G.D."/>
            <person name="Rodriguez de Cordoba S."/>
            <person name="Rodriguez-Pena J.M."/>
            <person name="Ronning C.M."/>
            <person name="Rutter S."/>
            <person name="Salzberg S.L."/>
            <person name="Sanchez M."/>
            <person name="Sanchez-Ferrero J.C."/>
            <person name="Saunders D."/>
            <person name="Seeger K."/>
            <person name="Squares R."/>
            <person name="Squares S."/>
            <person name="Takeuchi M."/>
            <person name="Tekaia F."/>
            <person name="Turner G."/>
            <person name="Vazquez de Aldana C.R."/>
            <person name="Weidman J."/>
            <person name="White O."/>
            <person name="Woodward J.R."/>
            <person name="Yu J.-H."/>
            <person name="Fraser C.M."/>
            <person name="Galagan J.E."/>
            <person name="Asai K."/>
            <person name="Machida M."/>
            <person name="Hall N."/>
            <person name="Barrell B.G."/>
            <person name="Denning D.W."/>
        </authorList>
    </citation>
    <scope>NUCLEOTIDE SEQUENCE [LARGE SCALE GENOMIC DNA]</scope>
    <source>
        <strain>ATCC MYA-4609 / CBS 101355 / FGSC A1100 / Af293</strain>
    </source>
</reference>
<keyword id="KW-0963">Cytoplasm</keyword>
<keyword id="KW-1185">Reference proteome</keyword>
<keyword id="KW-0687">Ribonucleoprotein</keyword>
<keyword id="KW-0689">Ribosomal protein</keyword>
<accession>Q4WBL6</accession>
<dbReference type="EMBL" id="AAHF01000014">
    <property type="protein sequence ID" value="EAL84896.2"/>
    <property type="molecule type" value="Genomic_DNA"/>
</dbReference>
<dbReference type="RefSeq" id="XP_746934.2">
    <property type="nucleotide sequence ID" value="XM_741841.2"/>
</dbReference>
<dbReference type="SMR" id="Q4WBL6"/>
<dbReference type="FunCoup" id="Q4WBL6">
    <property type="interactions" value="1201"/>
</dbReference>
<dbReference type="STRING" id="330879.Q4WBL6"/>
<dbReference type="EnsemblFungi" id="EAL84896">
    <property type="protein sequence ID" value="EAL84896"/>
    <property type="gene ID" value="AFUA_8G02730"/>
</dbReference>
<dbReference type="GeneID" id="3504355"/>
<dbReference type="KEGG" id="afm:AFUA_8G02730"/>
<dbReference type="VEuPathDB" id="FungiDB:Afu8g02730"/>
<dbReference type="eggNOG" id="KOG3239">
    <property type="taxonomic scope" value="Eukaryota"/>
</dbReference>
<dbReference type="HOGENOM" id="CLU_073511_0_1_1"/>
<dbReference type="InParanoid" id="Q4WBL6"/>
<dbReference type="OMA" id="EVFEIDM"/>
<dbReference type="OrthoDB" id="277199at2759"/>
<dbReference type="Proteomes" id="UP000002530">
    <property type="component" value="Chromosome 8"/>
</dbReference>
<dbReference type="GO" id="GO:0005737">
    <property type="term" value="C:cytoplasm"/>
    <property type="evidence" value="ECO:0007669"/>
    <property type="project" value="UniProtKB-SubCell"/>
</dbReference>
<dbReference type="GO" id="GO:1990904">
    <property type="term" value="C:ribonucleoprotein complex"/>
    <property type="evidence" value="ECO:0007669"/>
    <property type="project" value="UniProtKB-KW"/>
</dbReference>
<dbReference type="GO" id="GO:0005840">
    <property type="term" value="C:ribosome"/>
    <property type="evidence" value="ECO:0007669"/>
    <property type="project" value="UniProtKB-KW"/>
</dbReference>
<dbReference type="GO" id="GO:0003743">
    <property type="term" value="F:translation initiation factor activity"/>
    <property type="evidence" value="ECO:0007669"/>
    <property type="project" value="InterPro"/>
</dbReference>
<dbReference type="GO" id="GO:0001731">
    <property type="term" value="P:formation of translation preinitiation complex"/>
    <property type="evidence" value="ECO:0000318"/>
    <property type="project" value="GO_Central"/>
</dbReference>
<dbReference type="GO" id="GO:0000184">
    <property type="term" value="P:nuclear-transcribed mRNA catabolic process, nonsense-mediated decay"/>
    <property type="evidence" value="ECO:0007669"/>
    <property type="project" value="EnsemblFungi"/>
</dbReference>
<dbReference type="GO" id="GO:0032790">
    <property type="term" value="P:ribosome disassembly"/>
    <property type="evidence" value="ECO:0007669"/>
    <property type="project" value="EnsemblFungi"/>
</dbReference>
<dbReference type="GO" id="GO:0002188">
    <property type="term" value="P:translation reinitiation"/>
    <property type="evidence" value="ECO:0000318"/>
    <property type="project" value="GO_Central"/>
</dbReference>
<dbReference type="CDD" id="cd11607">
    <property type="entry name" value="DENR_C"/>
    <property type="match status" value="1"/>
</dbReference>
<dbReference type="FunFam" id="3.30.780.10:FF:000014">
    <property type="entry name" value="Translation machinery-associated protein 22"/>
    <property type="match status" value="1"/>
</dbReference>
<dbReference type="Gene3D" id="3.30.780.10">
    <property type="entry name" value="SUI1-like domain"/>
    <property type="match status" value="1"/>
</dbReference>
<dbReference type="InterPro" id="IPR050318">
    <property type="entry name" value="DENR/SUI1_TIF"/>
</dbReference>
<dbReference type="InterPro" id="IPR046447">
    <property type="entry name" value="DENR_C"/>
</dbReference>
<dbReference type="InterPro" id="IPR005873">
    <property type="entry name" value="DENR_eukaryotes"/>
</dbReference>
<dbReference type="InterPro" id="IPR048517">
    <property type="entry name" value="DENR_N"/>
</dbReference>
<dbReference type="InterPro" id="IPR001950">
    <property type="entry name" value="SUI1"/>
</dbReference>
<dbReference type="InterPro" id="IPR036877">
    <property type="entry name" value="SUI1_dom_sf"/>
</dbReference>
<dbReference type="NCBIfam" id="TIGR01159">
    <property type="entry name" value="DRP1"/>
    <property type="match status" value="1"/>
</dbReference>
<dbReference type="PANTHER" id="PTHR12789:SF0">
    <property type="entry name" value="DENSITY-REGULATED PROTEIN"/>
    <property type="match status" value="1"/>
</dbReference>
<dbReference type="PANTHER" id="PTHR12789">
    <property type="entry name" value="DENSITY-REGULATED PROTEIN HOMOLOG"/>
    <property type="match status" value="1"/>
</dbReference>
<dbReference type="Pfam" id="PF21023">
    <property type="entry name" value="DENR_N"/>
    <property type="match status" value="1"/>
</dbReference>
<dbReference type="Pfam" id="PF01253">
    <property type="entry name" value="SUI1"/>
    <property type="match status" value="1"/>
</dbReference>
<dbReference type="SUPFAM" id="SSF55159">
    <property type="entry name" value="eIF1-like"/>
    <property type="match status" value="1"/>
</dbReference>
<dbReference type="PROSITE" id="PS50296">
    <property type="entry name" value="SUI1"/>
    <property type="match status" value="1"/>
</dbReference>
<feature type="chain" id="PRO_0000320434" description="Translation machinery-associated protein 22">
    <location>
        <begin position="1"/>
        <end position="194"/>
    </location>
</feature>
<feature type="domain" description="SUI1" evidence="2">
    <location>
        <begin position="102"/>
        <end position="173"/>
    </location>
</feature>
<comment type="subunit">
    <text evidence="1">Interacts with the 40S ribosomal subunit.</text>
</comment>
<comment type="subcellular location">
    <subcellularLocation>
        <location evidence="1">Cytoplasm</location>
    </subcellularLocation>
</comment>
<comment type="domain">
    <text>The SUI1 domain may be involved in RNA binding.</text>
</comment>
<comment type="similarity">
    <text evidence="3">Belongs to the DENR family.</text>
</comment>
<name>DENR_ASPFU</name>
<protein>
    <recommendedName>
        <fullName>Translation machinery-associated protein 22</fullName>
    </recommendedName>
</protein>
<sequence>MSEVAQNSPAEVQAKKVVYCGVCTLPPEYCEFGGTAKKCEEWLKDNHAELYQRLYSEEALSSNLSELSVSVRERAAKDAAKKEAKAAAAEARDAERKAAAKVQIKRVERNKRKHVTVITGLEVHGLENKKVAKELGKKFATGSSVTKSPAGVEEITVQGDVSEDVKEWLLELYGKEIPESNIELVEDKKKKTSG</sequence>
<organism>
    <name type="scientific">Aspergillus fumigatus (strain ATCC MYA-4609 / CBS 101355 / FGSC A1100 / Af293)</name>
    <name type="common">Neosartorya fumigata</name>
    <dbReference type="NCBI Taxonomy" id="330879"/>
    <lineage>
        <taxon>Eukaryota</taxon>
        <taxon>Fungi</taxon>
        <taxon>Dikarya</taxon>
        <taxon>Ascomycota</taxon>
        <taxon>Pezizomycotina</taxon>
        <taxon>Eurotiomycetes</taxon>
        <taxon>Eurotiomycetidae</taxon>
        <taxon>Eurotiales</taxon>
        <taxon>Aspergillaceae</taxon>
        <taxon>Aspergillus</taxon>
        <taxon>Aspergillus subgen. Fumigati</taxon>
    </lineage>
</organism>
<gene>
    <name type="primary">tma22</name>
    <name type="ORF">AFUA_8G02730</name>
</gene>
<proteinExistence type="inferred from homology"/>
<evidence type="ECO:0000250" key="1"/>
<evidence type="ECO:0000255" key="2">
    <source>
        <dbReference type="PROSITE-ProRule" id="PRU00200"/>
    </source>
</evidence>
<evidence type="ECO:0000305" key="3"/>